<keyword id="KW-0997">Cell inner membrane</keyword>
<keyword id="KW-1003">Cell membrane</keyword>
<keyword id="KW-0328">Glycosyltransferase</keyword>
<keyword id="KW-0472">Membrane</keyword>
<keyword id="KW-0808">Transferase</keyword>
<proteinExistence type="inferred from homology"/>
<sequence length="361" mass="40757">MTTLIHVLGSDIPHHNQTVLRFFNDVLAKRLPSDQTRHFMVAAKDAAALGPFPELNLECHPDKKSLAMAVIARAQADRDQRFFFHGQFNPTLWLALLSGKIKAHQVSWHIWGADLYENATSWKFRLFYLLRRIAQGRVGRVFATRGDVIHYQQRHARVPASLLYFPTRMDPALTGISVEKNLAGPMTILVGNSGDRTNRHVEALKAIHQQFGADVRVILPMGYPANNEAYIEQVRTAGLALFSASNLQVLTQQVAFDDYLNILRECDLGYFIFNRQQGIGTLCLLIQFGVPFVLSRQNPFWQDLAEQHLPVLFYGDSLDEAVVREAQRQLASVDKQEIAFFNPNYVDGWQQALALAAGDNS</sequence>
<evidence type="ECO:0000255" key="1">
    <source>
        <dbReference type="HAMAP-Rule" id="MF_01002"/>
    </source>
</evidence>
<comment type="function">
    <text evidence="1">Catalyzes the synthesis of Und-PP-GlcNAc-ManNAcA-Fuc4NAc (Lipid III), the third lipid-linked intermediate involved in ECA synthesis.</text>
</comment>
<comment type="catalytic activity">
    <reaction evidence="1">
        <text>beta-D-ManNAcA-(1-&gt;4)-alpha-D-GlcNAc-di-trans,octa-cis-undecaprenyl diphosphate + dTDP-4-acetamido-4,6-dideoxy-alpha-D-galactose = alpha-D-FucNAc4-(1-&gt;4)-beta-D-ManNAcA-(1-&gt;4)-D-GlcNAc-undecaprenyl diphosphate + dTDP + H(+)</text>
        <dbReference type="Rhea" id="RHEA:28759"/>
        <dbReference type="ChEBI" id="CHEBI:15378"/>
        <dbReference type="ChEBI" id="CHEBI:58369"/>
        <dbReference type="ChEBI" id="CHEBI:61495"/>
        <dbReference type="ChEBI" id="CHEBI:61496"/>
        <dbReference type="ChEBI" id="CHEBI:68493"/>
        <dbReference type="EC" id="2.4.1.325"/>
    </reaction>
</comment>
<comment type="pathway">
    <text evidence="1">Bacterial outer membrane biogenesis; enterobacterial common antigen biosynthesis.</text>
</comment>
<comment type="subcellular location">
    <subcellularLocation>
        <location evidence="1">Cell inner membrane</location>
        <topology evidence="1">Peripheral membrane protein</topology>
    </subcellularLocation>
</comment>
<comment type="similarity">
    <text evidence="1">Belongs to the glycosyltransferase 56 family.</text>
</comment>
<name>WECF_SERP5</name>
<dbReference type="EC" id="2.4.1.325" evidence="1"/>
<dbReference type="EMBL" id="CP000826">
    <property type="protein sequence ID" value="ABV39280.1"/>
    <property type="molecule type" value="Genomic_DNA"/>
</dbReference>
<dbReference type="SMR" id="A8G840"/>
<dbReference type="STRING" id="399741.Spro_0170"/>
<dbReference type="CAZy" id="GT56">
    <property type="family name" value="Glycosyltransferase Family 56"/>
</dbReference>
<dbReference type="KEGG" id="spe:Spro_0170"/>
<dbReference type="eggNOG" id="COG0554">
    <property type="taxonomic scope" value="Bacteria"/>
</dbReference>
<dbReference type="HOGENOM" id="CLU_066584_0_0_6"/>
<dbReference type="OrthoDB" id="6532169at2"/>
<dbReference type="UniPathway" id="UPA00566"/>
<dbReference type="GO" id="GO:0005886">
    <property type="term" value="C:plasma membrane"/>
    <property type="evidence" value="ECO:0007669"/>
    <property type="project" value="UniProtKB-SubCell"/>
</dbReference>
<dbReference type="GO" id="GO:0102031">
    <property type="term" value="F:4-acetamido-4,6-dideoxy-D-galactose transferase activity"/>
    <property type="evidence" value="ECO:0007669"/>
    <property type="project" value="UniProtKB-EC"/>
</dbReference>
<dbReference type="GO" id="GO:0008417">
    <property type="term" value="F:fucosyltransferase activity"/>
    <property type="evidence" value="ECO:0007669"/>
    <property type="project" value="InterPro"/>
</dbReference>
<dbReference type="GO" id="GO:0009246">
    <property type="term" value="P:enterobacterial common antigen biosynthetic process"/>
    <property type="evidence" value="ECO:0007669"/>
    <property type="project" value="UniProtKB-UniRule"/>
</dbReference>
<dbReference type="GO" id="GO:0036065">
    <property type="term" value="P:fucosylation"/>
    <property type="evidence" value="ECO:0007669"/>
    <property type="project" value="InterPro"/>
</dbReference>
<dbReference type="HAMAP" id="MF_01002">
    <property type="entry name" value="WecF_RffT"/>
    <property type="match status" value="1"/>
</dbReference>
<dbReference type="InterPro" id="IPR009993">
    <property type="entry name" value="WecF"/>
</dbReference>
<dbReference type="NCBIfam" id="NF002753">
    <property type="entry name" value="PRK02797.1-2"/>
    <property type="match status" value="1"/>
</dbReference>
<dbReference type="Pfam" id="PF07429">
    <property type="entry name" value="Glyco_transf_56"/>
    <property type="match status" value="1"/>
</dbReference>
<accession>A8G840</accession>
<reference key="1">
    <citation type="submission" date="2007-09" db="EMBL/GenBank/DDBJ databases">
        <title>Complete sequence of chromosome of Serratia proteamaculans 568.</title>
        <authorList>
            <consortium name="US DOE Joint Genome Institute"/>
            <person name="Copeland A."/>
            <person name="Lucas S."/>
            <person name="Lapidus A."/>
            <person name="Barry K."/>
            <person name="Glavina del Rio T."/>
            <person name="Dalin E."/>
            <person name="Tice H."/>
            <person name="Pitluck S."/>
            <person name="Chain P."/>
            <person name="Malfatti S."/>
            <person name="Shin M."/>
            <person name="Vergez L."/>
            <person name="Schmutz J."/>
            <person name="Larimer F."/>
            <person name="Land M."/>
            <person name="Hauser L."/>
            <person name="Kyrpides N."/>
            <person name="Kim E."/>
            <person name="Taghavi S."/>
            <person name="Newman L."/>
            <person name="Vangronsveld J."/>
            <person name="van der Lelie D."/>
            <person name="Richardson P."/>
        </authorList>
    </citation>
    <scope>NUCLEOTIDE SEQUENCE [LARGE SCALE GENOMIC DNA]</scope>
    <source>
        <strain>568</strain>
    </source>
</reference>
<feature type="chain" id="PRO_1000062745" description="TDP-N-acetylfucosamine:lipid II N-acetylfucosaminyltransferase">
    <location>
        <begin position="1"/>
        <end position="361"/>
    </location>
</feature>
<organism>
    <name type="scientific">Serratia proteamaculans (strain 568)</name>
    <dbReference type="NCBI Taxonomy" id="399741"/>
    <lineage>
        <taxon>Bacteria</taxon>
        <taxon>Pseudomonadati</taxon>
        <taxon>Pseudomonadota</taxon>
        <taxon>Gammaproteobacteria</taxon>
        <taxon>Enterobacterales</taxon>
        <taxon>Yersiniaceae</taxon>
        <taxon>Serratia</taxon>
    </lineage>
</organism>
<protein>
    <recommendedName>
        <fullName evidence="1">TDP-N-acetylfucosamine:lipid II N-acetylfucosaminyltransferase</fullName>
        <ecNumber evidence="1">2.4.1.325</ecNumber>
    </recommendedName>
    <alternativeName>
        <fullName evidence="1">4-alpha-L-fucosyltransferase</fullName>
    </alternativeName>
    <alternativeName>
        <fullName evidence="1">TDP-Fuc4NAc:lipid II Fuc4NAc transferase</fullName>
        <shortName evidence="1">Fuc4NAc transferase</shortName>
    </alternativeName>
</protein>
<gene>
    <name evidence="1" type="primary">wecF</name>
    <name evidence="1" type="synonym">rffT</name>
    <name type="ordered locus">Spro_0170</name>
</gene>